<accession>P51652</accession>
<accession>Q498E4</accession>
<name>AKC1H_RAT</name>
<gene>
    <name type="primary">Akr1c18</name>
</gene>
<organism>
    <name type="scientific">Rattus norvegicus</name>
    <name type="common">Rat</name>
    <dbReference type="NCBI Taxonomy" id="10116"/>
    <lineage>
        <taxon>Eukaryota</taxon>
        <taxon>Metazoa</taxon>
        <taxon>Chordata</taxon>
        <taxon>Craniata</taxon>
        <taxon>Vertebrata</taxon>
        <taxon>Euteleostomi</taxon>
        <taxon>Mammalia</taxon>
        <taxon>Eutheria</taxon>
        <taxon>Euarchontoglires</taxon>
        <taxon>Glires</taxon>
        <taxon>Rodentia</taxon>
        <taxon>Myomorpha</taxon>
        <taxon>Muroidea</taxon>
        <taxon>Muridae</taxon>
        <taxon>Murinae</taxon>
        <taxon>Rattus</taxon>
    </lineage>
</organism>
<feature type="chain" id="PRO_0000124650" description="Aldo-keto reductase family 1 member C18">
    <location>
        <begin position="1"/>
        <end position="323"/>
    </location>
</feature>
<feature type="active site" description="Proton donor" evidence="1">
    <location>
        <position position="55"/>
    </location>
</feature>
<feature type="binding site" evidence="1">
    <location>
        <begin position="20"/>
        <end position="24"/>
    </location>
    <ligand>
        <name>NADP(+)</name>
        <dbReference type="ChEBI" id="CHEBI:58349"/>
    </ligand>
</feature>
<feature type="binding site" evidence="1">
    <location>
        <position position="50"/>
    </location>
    <ligand>
        <name>NADP(+)</name>
        <dbReference type="ChEBI" id="CHEBI:58349"/>
    </ligand>
</feature>
<feature type="binding site" evidence="1">
    <location>
        <position position="117"/>
    </location>
    <ligand>
        <name>substrate</name>
    </ligand>
</feature>
<feature type="binding site" evidence="1">
    <location>
        <begin position="166"/>
        <end position="167"/>
    </location>
    <ligand>
        <name>NADP(+)</name>
        <dbReference type="ChEBI" id="CHEBI:58349"/>
    </ligand>
</feature>
<feature type="binding site" evidence="1">
    <location>
        <position position="190"/>
    </location>
    <ligand>
        <name>NADP(+)</name>
        <dbReference type="ChEBI" id="CHEBI:58349"/>
    </ligand>
</feature>
<feature type="binding site" evidence="1">
    <location>
        <begin position="216"/>
        <end position="221"/>
    </location>
    <ligand>
        <name>NADP(+)</name>
        <dbReference type="ChEBI" id="CHEBI:58349"/>
    </ligand>
</feature>
<feature type="binding site" evidence="1">
    <location>
        <begin position="270"/>
        <end position="280"/>
    </location>
    <ligand>
        <name>NADP(+)</name>
        <dbReference type="ChEBI" id="CHEBI:58349"/>
    </ligand>
</feature>
<feature type="site" description="Important for substrate specificity" evidence="1">
    <location>
        <position position="54"/>
    </location>
</feature>
<feature type="site" description="Lowers pKa of active site Tyr" evidence="1">
    <location>
        <position position="84"/>
    </location>
</feature>
<feature type="sequence conflict" description="In Ref. 4; AA sequence." evidence="2" ref="4">
    <original>C</original>
    <variation>L</variation>
    <location>
        <position position="242"/>
    </location>
</feature>
<protein>
    <recommendedName>
        <fullName>Aldo-keto reductase family 1 member C18</fullName>
        <ecNumber>1.1.-.-</ecNumber>
    </recommendedName>
    <alternativeName>
        <fullName>20-alpha-hydroxysteroid dehydrogenase</fullName>
        <shortName>20-alpha-HSD</shortName>
        <ecNumber>1.1.1.149</ecNumber>
    </alternativeName>
    <alternativeName>
        <fullName>HSD1</fullName>
    </alternativeName>
</protein>
<comment type="function">
    <text>Catalyzes the conversion of progesterone into 20-alpha-dihydroprogesterone (20 alpha-OHP).</text>
</comment>
<comment type="catalytic activity">
    <reaction>
        <text>(17R,20S)-17,20-dihydroxypregn-4-en-3-one + NADP(+) = 17alpha-hydroxyprogesterone + NADPH + H(+)</text>
        <dbReference type="Rhea" id="RHEA:15857"/>
        <dbReference type="ChEBI" id="CHEBI:15378"/>
        <dbReference type="ChEBI" id="CHEBI:16418"/>
        <dbReference type="ChEBI" id="CHEBI:17252"/>
        <dbReference type="ChEBI" id="CHEBI:57783"/>
        <dbReference type="ChEBI" id="CHEBI:58349"/>
        <dbReference type="EC" id="1.1.1.149"/>
    </reaction>
</comment>
<comment type="catalytic activity">
    <reaction>
        <text>(17R,20S)-17,20-dihydroxypregn-4-en-3-one + NAD(+) = 17alpha-hydroxyprogesterone + NADH + H(+)</text>
        <dbReference type="Rhea" id="RHEA:15853"/>
        <dbReference type="ChEBI" id="CHEBI:15378"/>
        <dbReference type="ChEBI" id="CHEBI:16418"/>
        <dbReference type="ChEBI" id="CHEBI:17252"/>
        <dbReference type="ChEBI" id="CHEBI:57540"/>
        <dbReference type="ChEBI" id="CHEBI:57945"/>
        <dbReference type="EC" id="1.1.1.149"/>
    </reaction>
</comment>
<comment type="subunit">
    <text>Monomer.</text>
</comment>
<comment type="subcellular location">
    <subcellularLocation>
        <location>Cytoplasm</location>
    </subcellularLocation>
</comment>
<comment type="tissue specificity">
    <text>Corpus luteum (large luteal cells).</text>
</comment>
<comment type="developmental stage">
    <text>Remains repressed throughout pregnancy and becomes highly and rapidly expressed before parturition.</text>
</comment>
<comment type="induction">
    <text>Repressed by prolactin.</text>
</comment>
<comment type="PTM">
    <text>The N-terminus is blocked.</text>
</comment>
<comment type="similarity">
    <text evidence="2">Belongs to the aldo/keto reductase family.</text>
</comment>
<dbReference type="EC" id="1.1.-.-"/>
<dbReference type="EC" id="1.1.1.149"/>
<dbReference type="EMBL" id="L32601">
    <property type="protein sequence ID" value="AAA40601.1"/>
    <property type="molecule type" value="mRNA"/>
</dbReference>
<dbReference type="EMBL" id="D14424">
    <property type="protein sequence ID" value="BAA03317.1"/>
    <property type="molecule type" value="mRNA"/>
</dbReference>
<dbReference type="EMBL" id="BC100248">
    <property type="protein sequence ID" value="AAI00249.1"/>
    <property type="molecule type" value="mRNA"/>
</dbReference>
<dbReference type="PIR" id="JC2330">
    <property type="entry name" value="JC2330"/>
</dbReference>
<dbReference type="RefSeq" id="NP_612519.1">
    <property type="nucleotide sequence ID" value="NM_138510.1"/>
</dbReference>
<dbReference type="SMR" id="P51652"/>
<dbReference type="FunCoup" id="P51652">
    <property type="interactions" value="23"/>
</dbReference>
<dbReference type="STRING" id="10116.ENSRNOP00000023739"/>
<dbReference type="PhosphoSitePlus" id="P51652"/>
<dbReference type="PaxDb" id="10116-ENSRNOP00000023739"/>
<dbReference type="Ensembl" id="ENSRNOT00000023739.6">
    <property type="protein sequence ID" value="ENSRNOP00000023739.4"/>
    <property type="gene ID" value="ENSRNOG00000017531.8"/>
</dbReference>
<dbReference type="GeneID" id="171516"/>
<dbReference type="KEGG" id="rno:171516"/>
<dbReference type="UCSC" id="RGD:708428">
    <property type="organism name" value="rat"/>
</dbReference>
<dbReference type="AGR" id="RGD:708428"/>
<dbReference type="CTD" id="8644"/>
<dbReference type="RGD" id="708428">
    <property type="gene designation" value="Akr1c18"/>
</dbReference>
<dbReference type="eggNOG" id="KOG1577">
    <property type="taxonomic scope" value="Eukaryota"/>
</dbReference>
<dbReference type="GeneTree" id="ENSGT00940000153677"/>
<dbReference type="HOGENOM" id="CLU_023205_0_0_1"/>
<dbReference type="InParanoid" id="P51652"/>
<dbReference type="OMA" id="SARMYKN"/>
<dbReference type="OrthoDB" id="416253at2759"/>
<dbReference type="PhylomeDB" id="P51652"/>
<dbReference type="TreeFam" id="TF106492"/>
<dbReference type="PRO" id="PR:P51652"/>
<dbReference type="Proteomes" id="UP000002494">
    <property type="component" value="Chromosome 17"/>
</dbReference>
<dbReference type="Bgee" id="ENSRNOG00000017531">
    <property type="expression patterns" value="Expressed in ovary and 9 other cell types or tissues"/>
</dbReference>
<dbReference type="GO" id="GO:0005737">
    <property type="term" value="C:cytoplasm"/>
    <property type="evidence" value="ECO:0000266"/>
    <property type="project" value="RGD"/>
</dbReference>
<dbReference type="GO" id="GO:0005829">
    <property type="term" value="C:cytosol"/>
    <property type="evidence" value="ECO:0000314"/>
    <property type="project" value="MGI"/>
</dbReference>
<dbReference type="GO" id="GO:0005634">
    <property type="term" value="C:nucleus"/>
    <property type="evidence" value="ECO:0000266"/>
    <property type="project" value="RGD"/>
</dbReference>
<dbReference type="GO" id="GO:0047020">
    <property type="term" value="F:15-hydroxyprostaglandin-D dehydrogenase (NADP+) activity"/>
    <property type="evidence" value="ECO:0000266"/>
    <property type="project" value="RGD"/>
</dbReference>
<dbReference type="GO" id="GO:0047006">
    <property type="term" value="F:17-alpha,20-alpha-dihydroxypregn-4-en-3-one dehydrogenase [NAD(P)+] activity"/>
    <property type="evidence" value="ECO:0000314"/>
    <property type="project" value="MGI"/>
</dbReference>
<dbReference type="GO" id="GO:0004033">
    <property type="term" value="F:aldo-keto reductase (NADPH) activity"/>
    <property type="evidence" value="ECO:0000314"/>
    <property type="project" value="RGD"/>
</dbReference>
<dbReference type="GO" id="GO:0004032">
    <property type="term" value="F:aldose reductase (NADPH) activity"/>
    <property type="evidence" value="ECO:0000314"/>
    <property type="project" value="RGD"/>
</dbReference>
<dbReference type="GO" id="GO:0004745">
    <property type="term" value="F:all-trans-retinol dehydrogenase (NAD+) activity"/>
    <property type="evidence" value="ECO:0000266"/>
    <property type="project" value="RGD"/>
</dbReference>
<dbReference type="GO" id="GO:0047023">
    <property type="term" value="F:androsterone dehydrogenase [NAD(P)+] activity"/>
    <property type="evidence" value="ECO:0000266"/>
    <property type="project" value="RGD"/>
</dbReference>
<dbReference type="GO" id="GO:0032052">
    <property type="term" value="F:bile acid binding"/>
    <property type="evidence" value="ECO:0000318"/>
    <property type="project" value="GO_Central"/>
</dbReference>
<dbReference type="GO" id="GO:0047787">
    <property type="term" value="F:Delta4-3-oxosteroid 5beta-reductase activity"/>
    <property type="evidence" value="ECO:0000266"/>
    <property type="project" value="RGD"/>
</dbReference>
<dbReference type="GO" id="GO:0045550">
    <property type="term" value="F:geranylgeranyl reductase activity"/>
    <property type="evidence" value="ECO:0000266"/>
    <property type="project" value="RGD"/>
</dbReference>
<dbReference type="GO" id="GO:0045703">
    <property type="term" value="F:ketoreductase activity"/>
    <property type="evidence" value="ECO:0000266"/>
    <property type="project" value="RGD"/>
</dbReference>
<dbReference type="GO" id="GO:0047086">
    <property type="term" value="F:ketosteroid monooxygenase activity"/>
    <property type="evidence" value="ECO:0000266"/>
    <property type="project" value="RGD"/>
</dbReference>
<dbReference type="GO" id="GO:0016655">
    <property type="term" value="F:oxidoreductase activity, acting on NAD(P)H, quinone or similar compound as acceptor"/>
    <property type="evidence" value="ECO:0000266"/>
    <property type="project" value="RGD"/>
</dbReference>
<dbReference type="GO" id="GO:0036131">
    <property type="term" value="F:prostaglandin D2 11-ketoreductase activity"/>
    <property type="evidence" value="ECO:0000266"/>
    <property type="project" value="RGD"/>
</dbReference>
<dbReference type="GO" id="GO:0036130">
    <property type="term" value="F:prostaglandin H2 endoperoxidase reductase activity"/>
    <property type="evidence" value="ECO:0000266"/>
    <property type="project" value="RGD"/>
</dbReference>
<dbReference type="GO" id="GO:0001758">
    <property type="term" value="F:retinal dehydrogenase activity"/>
    <property type="evidence" value="ECO:0000266"/>
    <property type="project" value="RGD"/>
</dbReference>
<dbReference type="GO" id="GO:0030283">
    <property type="term" value="F:testosterone dehydrogenase [NAD(P)+] activity"/>
    <property type="evidence" value="ECO:0000266"/>
    <property type="project" value="RGD"/>
</dbReference>
<dbReference type="GO" id="GO:0071277">
    <property type="term" value="P:cellular response to calcium ion"/>
    <property type="evidence" value="ECO:0000266"/>
    <property type="project" value="RGD"/>
</dbReference>
<dbReference type="GO" id="GO:0071384">
    <property type="term" value="P:cellular response to corticosteroid stimulus"/>
    <property type="evidence" value="ECO:0000266"/>
    <property type="project" value="RGD"/>
</dbReference>
<dbReference type="GO" id="GO:0071372">
    <property type="term" value="P:cellular response to follicle-stimulating hormone stimulus"/>
    <property type="evidence" value="ECO:0000270"/>
    <property type="project" value="RGD"/>
</dbReference>
<dbReference type="GO" id="GO:1904322">
    <property type="term" value="P:cellular response to forskolin"/>
    <property type="evidence" value="ECO:0000270"/>
    <property type="project" value="RGD"/>
</dbReference>
<dbReference type="GO" id="GO:0097211">
    <property type="term" value="P:cellular response to gonadotropin-releasing hormone"/>
    <property type="evidence" value="ECO:0000270"/>
    <property type="project" value="RGD"/>
</dbReference>
<dbReference type="GO" id="GO:0071395">
    <property type="term" value="P:cellular response to jasmonic acid stimulus"/>
    <property type="evidence" value="ECO:0000266"/>
    <property type="project" value="RGD"/>
</dbReference>
<dbReference type="GO" id="GO:1990646">
    <property type="term" value="P:cellular response to prolactin"/>
    <property type="evidence" value="ECO:0000270"/>
    <property type="project" value="RGD"/>
</dbReference>
<dbReference type="GO" id="GO:0071799">
    <property type="term" value="P:cellular response to prostaglandin D stimulus"/>
    <property type="evidence" value="ECO:0000266"/>
    <property type="project" value="RGD"/>
</dbReference>
<dbReference type="GO" id="GO:0071379">
    <property type="term" value="P:cellular response to prostaglandin stimulus"/>
    <property type="evidence" value="ECO:0000266"/>
    <property type="project" value="RGD"/>
</dbReference>
<dbReference type="GO" id="GO:0009267">
    <property type="term" value="P:cellular response to starvation"/>
    <property type="evidence" value="ECO:0000266"/>
    <property type="project" value="RGD"/>
</dbReference>
<dbReference type="GO" id="GO:0071394">
    <property type="term" value="P:cellular response to testosterone stimulus"/>
    <property type="evidence" value="ECO:0000270"/>
    <property type="project" value="RGD"/>
</dbReference>
<dbReference type="GO" id="GO:0071560">
    <property type="term" value="P:cellular response to transforming growth factor beta stimulus"/>
    <property type="evidence" value="ECO:0000315"/>
    <property type="project" value="RGD"/>
</dbReference>
<dbReference type="GO" id="GO:0044597">
    <property type="term" value="P:daunorubicin metabolic process"/>
    <property type="evidence" value="ECO:0000266"/>
    <property type="project" value="RGD"/>
</dbReference>
<dbReference type="GO" id="GO:0044598">
    <property type="term" value="P:doxorubicin metabolic process"/>
    <property type="evidence" value="ECO:0000266"/>
    <property type="project" value="RGD"/>
</dbReference>
<dbReference type="GO" id="GO:0016488">
    <property type="term" value="P:farnesol catabolic process"/>
    <property type="evidence" value="ECO:0000266"/>
    <property type="project" value="RGD"/>
</dbReference>
<dbReference type="GO" id="GO:0007565">
    <property type="term" value="P:female pregnancy"/>
    <property type="evidence" value="ECO:0000270"/>
    <property type="project" value="RGD"/>
</dbReference>
<dbReference type="GO" id="GO:0007186">
    <property type="term" value="P:G protein-coupled receptor signaling pathway"/>
    <property type="evidence" value="ECO:0000266"/>
    <property type="project" value="RGD"/>
</dbReference>
<dbReference type="GO" id="GO:0030216">
    <property type="term" value="P:keratinocyte differentiation"/>
    <property type="evidence" value="ECO:0000266"/>
    <property type="project" value="RGD"/>
</dbReference>
<dbReference type="GO" id="GO:0008584">
    <property type="term" value="P:male gonad development"/>
    <property type="evidence" value="ECO:0000266"/>
    <property type="project" value="RGD"/>
</dbReference>
<dbReference type="GO" id="GO:1900053">
    <property type="term" value="P:negative regulation of retinoic acid biosynthetic process"/>
    <property type="evidence" value="ECO:0000266"/>
    <property type="project" value="RGD"/>
</dbReference>
<dbReference type="GO" id="GO:0007567">
    <property type="term" value="P:parturition"/>
    <property type="evidence" value="ECO:0000266"/>
    <property type="project" value="RGD"/>
</dbReference>
<dbReference type="GO" id="GO:0008284">
    <property type="term" value="P:positive regulation of cell population proliferation"/>
    <property type="evidence" value="ECO:0000266"/>
    <property type="project" value="RGD"/>
</dbReference>
<dbReference type="GO" id="GO:2000353">
    <property type="term" value="P:positive regulation of endothelial cell apoptotic process"/>
    <property type="evidence" value="ECO:0000266"/>
    <property type="project" value="RGD"/>
</dbReference>
<dbReference type="GO" id="GO:0051897">
    <property type="term" value="P:positive regulation of phosphatidylinositol 3-kinase/protein kinase B signal transduction"/>
    <property type="evidence" value="ECO:0000266"/>
    <property type="project" value="RGD"/>
</dbReference>
<dbReference type="GO" id="GO:2000379">
    <property type="term" value="P:positive regulation of reactive oxygen species metabolic process"/>
    <property type="evidence" value="ECO:0000266"/>
    <property type="project" value="RGD"/>
</dbReference>
<dbReference type="GO" id="GO:0006709">
    <property type="term" value="P:progesterone catabolic process"/>
    <property type="evidence" value="ECO:0000266"/>
    <property type="project" value="RGD"/>
</dbReference>
<dbReference type="GO" id="GO:0042448">
    <property type="term" value="P:progesterone metabolic process"/>
    <property type="evidence" value="ECO:0000314"/>
    <property type="project" value="MGI"/>
</dbReference>
<dbReference type="GO" id="GO:0006693">
    <property type="term" value="P:prostaglandin metabolic process"/>
    <property type="evidence" value="ECO:0000266"/>
    <property type="project" value="RGD"/>
</dbReference>
<dbReference type="GO" id="GO:0048385">
    <property type="term" value="P:regulation of retinoic acid receptor signaling pathway"/>
    <property type="evidence" value="ECO:0000266"/>
    <property type="project" value="RGD"/>
</dbReference>
<dbReference type="GO" id="GO:0050810">
    <property type="term" value="P:regulation of steroid biosynthetic process"/>
    <property type="evidence" value="ECO:0000314"/>
    <property type="project" value="RGD"/>
</dbReference>
<dbReference type="GO" id="GO:2000224">
    <property type="term" value="P:regulation of testosterone biosynthetic process"/>
    <property type="evidence" value="ECO:0000266"/>
    <property type="project" value="RGD"/>
</dbReference>
<dbReference type="GO" id="GO:0007584">
    <property type="term" value="P:response to nutrient"/>
    <property type="evidence" value="ECO:0000266"/>
    <property type="project" value="RGD"/>
</dbReference>
<dbReference type="GO" id="GO:0042574">
    <property type="term" value="P:retinal metabolic process"/>
    <property type="evidence" value="ECO:0000266"/>
    <property type="project" value="RGD"/>
</dbReference>
<dbReference type="GO" id="GO:0008202">
    <property type="term" value="P:steroid metabolic process"/>
    <property type="evidence" value="ECO:0000266"/>
    <property type="project" value="RGD"/>
</dbReference>
<dbReference type="GO" id="GO:0061370">
    <property type="term" value="P:testosterone biosynthetic process"/>
    <property type="evidence" value="ECO:0000266"/>
    <property type="project" value="RGD"/>
</dbReference>
<dbReference type="CDD" id="cd19108">
    <property type="entry name" value="AKR_AKR1C1-35"/>
    <property type="match status" value="1"/>
</dbReference>
<dbReference type="FunFam" id="3.20.20.100:FF:000003">
    <property type="entry name" value="Aldo-keto reductase family 1 member C3"/>
    <property type="match status" value="1"/>
</dbReference>
<dbReference type="Gene3D" id="3.20.20.100">
    <property type="entry name" value="NADP-dependent oxidoreductase domain"/>
    <property type="match status" value="1"/>
</dbReference>
<dbReference type="InterPro" id="IPR020471">
    <property type="entry name" value="AKR"/>
</dbReference>
<dbReference type="InterPro" id="IPR044482">
    <property type="entry name" value="AKR1C"/>
</dbReference>
<dbReference type="InterPro" id="IPR018170">
    <property type="entry name" value="Aldo/ket_reductase_CS"/>
</dbReference>
<dbReference type="InterPro" id="IPR023210">
    <property type="entry name" value="NADP_OxRdtase_dom"/>
</dbReference>
<dbReference type="InterPro" id="IPR036812">
    <property type="entry name" value="NADP_OxRdtase_dom_sf"/>
</dbReference>
<dbReference type="PANTHER" id="PTHR11732">
    <property type="entry name" value="ALDO/KETO REDUCTASE"/>
    <property type="match status" value="1"/>
</dbReference>
<dbReference type="Pfam" id="PF00248">
    <property type="entry name" value="Aldo_ket_red"/>
    <property type="match status" value="1"/>
</dbReference>
<dbReference type="PIRSF" id="PIRSF000097">
    <property type="entry name" value="AKR"/>
    <property type="match status" value="1"/>
</dbReference>
<dbReference type="PRINTS" id="PR00069">
    <property type="entry name" value="ALDKETRDTASE"/>
</dbReference>
<dbReference type="SUPFAM" id="SSF51430">
    <property type="entry name" value="NAD(P)-linked oxidoreductase"/>
    <property type="match status" value="1"/>
</dbReference>
<dbReference type="PROSITE" id="PS00798">
    <property type="entry name" value="ALDOKETO_REDUCTASE_1"/>
    <property type="match status" value="1"/>
</dbReference>
<dbReference type="PROSITE" id="PS00062">
    <property type="entry name" value="ALDOKETO_REDUCTASE_2"/>
    <property type="match status" value="1"/>
</dbReference>
<dbReference type="PROSITE" id="PS00063">
    <property type="entry name" value="ALDOKETO_REDUCTASE_3"/>
    <property type="match status" value="1"/>
</dbReference>
<sequence>MNSKIQKMELNDGHSIPVLGFGTYATEENLRKKSMESTKIAIDVGFRHIDCSHLYQNEEEIGQAIVSKIEDGTVKREDIFYTSKLWSTSHRPELVRPSLENSLRKLNLDYVDLYLIHFPVSLKPGDELLPQDEHGNLILDTVDLCDTWEAMEKCKDAGLAKSIGVSNFNRRQLEKILNKPGLKHRPVCNQVECHLYLNQSKLLAYCKMNDIVLVAYGALGTQRYKYCINEDTPVLLDDPILCTMAKKYKRTPALIALRYQLERGIVTLVKSFNEERIRENLQVFDFQLASDDMEILDNLDRNLRYFPANMFKAHPNFPFSDEY</sequence>
<keyword id="KW-0963">Cytoplasm</keyword>
<keyword id="KW-0903">Direct protein sequencing</keyword>
<keyword id="KW-0521">NADP</keyword>
<keyword id="KW-0560">Oxidoreductase</keyword>
<keyword id="KW-1185">Reference proteome</keyword>
<evidence type="ECO:0000250" key="1"/>
<evidence type="ECO:0000305" key="2"/>
<proteinExistence type="evidence at protein level"/>
<reference key="1">
    <citation type="journal article" date="1994" name="Biochem. Biophys. Res. Commun.">
        <title>Isolation and characterization of a rat luteal cDNA encoding 20 alpha-hydroxysteroid dehydrogenase.</title>
        <authorList>
            <person name="Mao J."/>
            <person name="Duan W.R."/>
            <person name="Albarracin C.T."/>
            <person name="Parmer T.G."/>
            <person name="Gibori G."/>
        </authorList>
    </citation>
    <scope>NUCLEOTIDE SEQUENCE [MRNA]</scope>
    <scope>PROTEIN SEQUENCE OF 257-269 AND 315-323</scope>
    <source>
        <strain>Sprague-Dawley</strain>
        <tissue>Corpus luteum</tissue>
    </source>
</reference>
<reference key="2">
    <citation type="journal article" date="1994" name="Biochem. J.">
        <title>Molecular cloning of cDNA for rat ovarian 20 alpha-hydroxysteroid dehydrogenase (HSD1).</title>
        <authorList>
            <person name="Miura R."/>
            <person name="Shiota K."/>
            <person name="Noda K."/>
            <person name="Yagi S."/>
            <person name="Ogawa T."/>
            <person name="Takahashi M."/>
        </authorList>
    </citation>
    <scope>NUCLEOTIDE SEQUENCE [MRNA]</scope>
    <source>
        <strain>Wistar Imamichi</strain>
        <tissue>Ovary</tissue>
    </source>
</reference>
<reference key="3">
    <citation type="journal article" date="2004" name="Genome Res.">
        <title>The status, quality, and expansion of the NIH full-length cDNA project: the Mammalian Gene Collection (MGC).</title>
        <authorList>
            <consortium name="The MGC Project Team"/>
        </authorList>
    </citation>
    <scope>NUCLEOTIDE SEQUENCE [LARGE SCALE MRNA]</scope>
    <source>
        <tissue>Ovary</tissue>
    </source>
</reference>
<reference key="4">
    <citation type="journal article" date="1994" name="Endocrinology">
        <title>Identification of a major prolactin-regulated protein as 20 alpha-hydroxysteroid dehydrogenase: coordinate regulation of its activity, protein content, and messenger ribonucleic acid expression.</title>
        <authorList>
            <person name="Albarracin C.T."/>
            <person name="Parmer T.G."/>
            <person name="Duan W.R."/>
            <person name="Nelson S.E."/>
            <person name="Gibori G."/>
        </authorList>
    </citation>
    <scope>PROTEIN SEQUENCE OF 233-243; 252-269 AND 315-323</scope>
    <source>
        <strain>Sprague-Dawley</strain>
        <tissue>Corpus luteum</tissue>
    </source>
</reference>
<reference key="5">
    <citation type="journal article" date="1993" name="J. Reprod. Dev.">
        <authorList>
            <person name="Noda K."/>
            <person name="Shiota K."/>
            <person name="Ogawa T."/>
            <person name="Yagi S."/>
            <person name="Takahashi M."/>
        </authorList>
    </citation>
    <scope>PROTEIN SEQUENCE OF 3-21</scope>
</reference>